<geneLocation type="chloroplast"/>
<dbReference type="EC" id="1.10.3.9" evidence="2"/>
<dbReference type="EMBL" id="D17510">
    <property type="protein sequence ID" value="BAA04425.1"/>
    <property type="molecule type" value="Genomic_DNA"/>
</dbReference>
<dbReference type="PIR" id="T07549">
    <property type="entry name" value="T07549"/>
</dbReference>
<dbReference type="RefSeq" id="NP_042470.1">
    <property type="nucleotide sequence ID" value="NC_001631.1"/>
</dbReference>
<dbReference type="SMR" id="P41644"/>
<dbReference type="GeneID" id="809003"/>
<dbReference type="GO" id="GO:0009535">
    <property type="term" value="C:chloroplast thylakoid membrane"/>
    <property type="evidence" value="ECO:0007669"/>
    <property type="project" value="UniProtKB-SubCell"/>
</dbReference>
<dbReference type="GO" id="GO:0009523">
    <property type="term" value="C:photosystem II"/>
    <property type="evidence" value="ECO:0007669"/>
    <property type="project" value="UniProtKB-KW"/>
</dbReference>
<dbReference type="GO" id="GO:0016168">
    <property type="term" value="F:chlorophyll binding"/>
    <property type="evidence" value="ECO:0007669"/>
    <property type="project" value="UniProtKB-UniRule"/>
</dbReference>
<dbReference type="GO" id="GO:0045156">
    <property type="term" value="F:electron transporter, transferring electrons within the cyclic electron transport pathway of photosynthesis activity"/>
    <property type="evidence" value="ECO:0007669"/>
    <property type="project" value="InterPro"/>
</dbReference>
<dbReference type="GO" id="GO:0005506">
    <property type="term" value="F:iron ion binding"/>
    <property type="evidence" value="ECO:0007669"/>
    <property type="project" value="UniProtKB-UniRule"/>
</dbReference>
<dbReference type="GO" id="GO:0010242">
    <property type="term" value="F:oxygen evolving activity"/>
    <property type="evidence" value="ECO:0007669"/>
    <property type="project" value="UniProtKB-EC"/>
</dbReference>
<dbReference type="GO" id="GO:0009772">
    <property type="term" value="P:photosynthetic electron transport in photosystem II"/>
    <property type="evidence" value="ECO:0007669"/>
    <property type="project" value="InterPro"/>
</dbReference>
<dbReference type="CDD" id="cd09288">
    <property type="entry name" value="Photosystem-II_D2"/>
    <property type="match status" value="1"/>
</dbReference>
<dbReference type="FunFam" id="1.20.85.10:FF:000001">
    <property type="entry name" value="photosystem II D2 protein-like"/>
    <property type="match status" value="1"/>
</dbReference>
<dbReference type="Gene3D" id="1.20.85.10">
    <property type="entry name" value="Photosystem II protein D1-like"/>
    <property type="match status" value="1"/>
</dbReference>
<dbReference type="HAMAP" id="MF_01383">
    <property type="entry name" value="PSII_PsbD_D2"/>
    <property type="match status" value="1"/>
</dbReference>
<dbReference type="InterPro" id="IPR055266">
    <property type="entry name" value="D1/D2"/>
</dbReference>
<dbReference type="InterPro" id="IPR036854">
    <property type="entry name" value="Photo_II_D1/D2_sf"/>
</dbReference>
<dbReference type="InterPro" id="IPR000484">
    <property type="entry name" value="Photo_RC_L/M"/>
</dbReference>
<dbReference type="InterPro" id="IPR055265">
    <property type="entry name" value="Photo_RC_L/M_CS"/>
</dbReference>
<dbReference type="InterPro" id="IPR005868">
    <property type="entry name" value="PSII_PsbD/D2"/>
</dbReference>
<dbReference type="NCBIfam" id="TIGR01152">
    <property type="entry name" value="psbD"/>
    <property type="match status" value="1"/>
</dbReference>
<dbReference type="PANTHER" id="PTHR33149:SF12">
    <property type="entry name" value="PHOTOSYSTEM II D2 PROTEIN"/>
    <property type="match status" value="1"/>
</dbReference>
<dbReference type="PANTHER" id="PTHR33149">
    <property type="entry name" value="PHOTOSYSTEM II PROTEIN D1"/>
    <property type="match status" value="1"/>
</dbReference>
<dbReference type="Pfam" id="PF00124">
    <property type="entry name" value="Photo_RC"/>
    <property type="match status" value="1"/>
</dbReference>
<dbReference type="PRINTS" id="PR00256">
    <property type="entry name" value="REACTNCENTRE"/>
</dbReference>
<dbReference type="SUPFAM" id="SSF81483">
    <property type="entry name" value="Bacterial photosystem II reaction centre, L and M subunits"/>
    <property type="match status" value="1"/>
</dbReference>
<dbReference type="PROSITE" id="PS00244">
    <property type="entry name" value="REACTION_CENTER"/>
    <property type="match status" value="1"/>
</dbReference>
<name>PSBD_PINTH</name>
<proteinExistence type="inferred from homology"/>
<accession>P41644</accession>
<gene>
    <name evidence="2" type="primary">psbD</name>
</gene>
<comment type="function">
    <text evidence="2">Photosystem II (PSII) is a light-driven water:plastoquinone oxidoreductase that uses light energy to abstract electrons from H(2)O, generating O(2) and a proton gradient subsequently used for ATP formation. It consists of a core antenna complex that captures photons, and an electron transfer chain that converts photonic excitation into a charge separation. The D1/D2 (PsbA/PsbD) reaction center heterodimer binds P680, the primary electron donor of PSII as well as several subsequent electron acceptors. D2 is needed for assembly of a stable PSII complex.</text>
</comment>
<comment type="catalytic activity">
    <reaction evidence="2">
        <text>2 a plastoquinone + 4 hnu + 2 H2O = 2 a plastoquinol + O2</text>
        <dbReference type="Rhea" id="RHEA:36359"/>
        <dbReference type="Rhea" id="RHEA-COMP:9561"/>
        <dbReference type="Rhea" id="RHEA-COMP:9562"/>
        <dbReference type="ChEBI" id="CHEBI:15377"/>
        <dbReference type="ChEBI" id="CHEBI:15379"/>
        <dbReference type="ChEBI" id="CHEBI:17757"/>
        <dbReference type="ChEBI" id="CHEBI:30212"/>
        <dbReference type="ChEBI" id="CHEBI:62192"/>
        <dbReference type="EC" id="1.10.3.9"/>
    </reaction>
</comment>
<comment type="cofactor">
    <text evidence="2">The D1/D2 heterodimer binds P680, chlorophylls that are the primary electron donor of PSII, and subsequent electron acceptors. It shares a non-heme iron and each subunit binds pheophytin, quinone, additional chlorophylls, carotenoids and lipids. There is also a Cl(-1) ion associated with D1 and D2, which is required for oxygen evolution. The PSII complex binds additional chlorophylls, carotenoids and specific lipids.</text>
</comment>
<comment type="subunit">
    <text evidence="2">PSII is composed of 1 copy each of membrane proteins PsbA, PsbB, PsbC, PsbD, PsbE, PsbF, PsbH, PsbI, PsbJ, PsbK, PsbL, PsbM, PsbT, PsbX, PsbY, PsbZ, Psb30/Ycf12, at least 3 peripheral proteins of the oxygen-evolving complex and a large number of cofactors. It forms dimeric complexes.</text>
</comment>
<comment type="subcellular location">
    <subcellularLocation>
        <location evidence="2">Plastid</location>
        <location evidence="2">Chloroplast thylakoid membrane</location>
        <topology evidence="2">Multi-pass membrane protein</topology>
    </subcellularLocation>
</comment>
<comment type="miscellaneous">
    <text evidence="2">2 of the reaction center chlorophylls (ChlD1 and ChlD2) are entirely coordinated by water.</text>
</comment>
<comment type="similarity">
    <text evidence="2">Belongs to the reaction center PufL/M/PsbA/D family.</text>
</comment>
<sequence>MTIALGKSSKEEKTLFDTVDDWLRRDRFVFVGWSGLLLFPCAYFALGGWFTGTTFVTSWYTHGLASSYLEGCNFLTAAVSTPANSLAHSLLLLWGPEAQGDLTRWCQLGGLWTFVALHGAFGLIGFMLRQFELARSVQLRPYNAIAFSAPIAVFVSVFLIYPLGQSGWFFAPSFGVAAIFRFILFFQGFHNWTLNPFHMMGVAGVLGAALLCAIHGATVENTLFEDGDGANTFRAFNPTQAEETYSMVTANRFWSQIFGVAFSNKRWLHFFMLFVPVTGLWMSAIGVVGLALNLRAYDFVSQEIRAAEDPESETFYTKNILLNEGIRAWMAAQDQPHENLIFPEEVLPRGNAL</sequence>
<evidence type="ECO:0000250" key="1">
    <source>
        <dbReference type="UniProtKB" id="P56761"/>
    </source>
</evidence>
<evidence type="ECO:0000255" key="2">
    <source>
        <dbReference type="HAMAP-Rule" id="MF_01383"/>
    </source>
</evidence>
<feature type="initiator methionine" description="Removed" evidence="1">
    <location>
        <position position="1"/>
    </location>
</feature>
<feature type="chain" id="PRO_0000090517" description="Photosystem II D2 protein">
    <location>
        <begin position="2"/>
        <end position="353"/>
    </location>
</feature>
<feature type="transmembrane region" description="Helical" evidence="2">
    <location>
        <begin position="41"/>
        <end position="61"/>
    </location>
</feature>
<feature type="transmembrane region" description="Helical" evidence="2">
    <location>
        <begin position="125"/>
        <end position="141"/>
    </location>
</feature>
<feature type="transmembrane region" description="Helical" evidence="2">
    <location>
        <begin position="153"/>
        <end position="166"/>
    </location>
</feature>
<feature type="transmembrane region" description="Helical" evidence="2">
    <location>
        <begin position="208"/>
        <end position="228"/>
    </location>
</feature>
<feature type="transmembrane region" description="Helical" evidence="2">
    <location>
        <begin position="279"/>
        <end position="295"/>
    </location>
</feature>
<feature type="binding site" description="axial binding residue" evidence="2">
    <location>
        <position position="118"/>
    </location>
    <ligand>
        <name>chlorophyll a</name>
        <dbReference type="ChEBI" id="CHEBI:58416"/>
        <label>ChlzD2</label>
    </ligand>
    <ligandPart>
        <name>Mg</name>
        <dbReference type="ChEBI" id="CHEBI:25107"/>
    </ligandPart>
</feature>
<feature type="binding site" evidence="2">
    <location>
        <position position="130"/>
    </location>
    <ligand>
        <name>pheophytin a</name>
        <dbReference type="ChEBI" id="CHEBI:136840"/>
        <label>D2</label>
    </ligand>
</feature>
<feature type="binding site" evidence="2">
    <location>
        <position position="143"/>
    </location>
    <ligand>
        <name>pheophytin a</name>
        <dbReference type="ChEBI" id="CHEBI:136840"/>
        <label>D2</label>
    </ligand>
</feature>
<feature type="binding site" description="axial binding residue" evidence="2">
    <location>
        <position position="198"/>
    </location>
    <ligand>
        <name>chlorophyll a</name>
        <dbReference type="ChEBI" id="CHEBI:58416"/>
        <label>PD2</label>
    </ligand>
    <ligandPart>
        <name>Mg</name>
        <dbReference type="ChEBI" id="CHEBI:25107"/>
    </ligandPart>
</feature>
<feature type="binding site" evidence="2">
    <location>
        <position position="215"/>
    </location>
    <ligand>
        <name>a plastoquinone</name>
        <dbReference type="ChEBI" id="CHEBI:17757"/>
        <label>Q(A)</label>
    </ligand>
</feature>
<feature type="binding site" evidence="2">
    <location>
        <position position="215"/>
    </location>
    <ligand>
        <name>Fe cation</name>
        <dbReference type="ChEBI" id="CHEBI:24875"/>
        <note>ligand shared with heterodimeric partner</note>
    </ligand>
</feature>
<feature type="binding site" evidence="2">
    <location>
        <position position="262"/>
    </location>
    <ligand>
        <name>a plastoquinone</name>
        <dbReference type="ChEBI" id="CHEBI:17757"/>
        <label>Q(A)</label>
    </ligand>
</feature>
<feature type="binding site" evidence="2">
    <location>
        <position position="269"/>
    </location>
    <ligand>
        <name>Fe cation</name>
        <dbReference type="ChEBI" id="CHEBI:24875"/>
        <note>ligand shared with heterodimeric partner</note>
    </ligand>
</feature>
<feature type="modified residue" description="N-acetylthreonine" evidence="1">
    <location>
        <position position="2"/>
    </location>
</feature>
<feature type="modified residue" description="Phosphothreonine" evidence="1">
    <location>
        <position position="2"/>
    </location>
</feature>
<reference key="1">
    <citation type="journal article" date="1994" name="Proc. Natl. Acad. Sci. U.S.A.">
        <title>Loss of all ndh genes as determined by sequencing the entire chloroplast genome of the black pine Pinus thunbergii.</title>
        <authorList>
            <person name="Wakasugi T."/>
            <person name="Tsudzuki J."/>
            <person name="Ito S."/>
            <person name="Nakashima K."/>
            <person name="Tsudzuki T."/>
            <person name="Sugiura M."/>
        </authorList>
    </citation>
    <scope>NUCLEOTIDE SEQUENCE [LARGE SCALE GENOMIC DNA]</scope>
</reference>
<keyword id="KW-0007">Acetylation</keyword>
<keyword id="KW-0148">Chlorophyll</keyword>
<keyword id="KW-0150">Chloroplast</keyword>
<keyword id="KW-0157">Chromophore</keyword>
<keyword id="KW-0249">Electron transport</keyword>
<keyword id="KW-0408">Iron</keyword>
<keyword id="KW-0460">Magnesium</keyword>
<keyword id="KW-0472">Membrane</keyword>
<keyword id="KW-0479">Metal-binding</keyword>
<keyword id="KW-0560">Oxidoreductase</keyword>
<keyword id="KW-0597">Phosphoprotein</keyword>
<keyword id="KW-0602">Photosynthesis</keyword>
<keyword id="KW-0604">Photosystem II</keyword>
<keyword id="KW-0934">Plastid</keyword>
<keyword id="KW-0793">Thylakoid</keyword>
<keyword id="KW-0812">Transmembrane</keyword>
<keyword id="KW-1133">Transmembrane helix</keyword>
<keyword id="KW-0813">Transport</keyword>
<protein>
    <recommendedName>
        <fullName evidence="2">Photosystem II D2 protein</fullName>
        <shortName evidence="2">PSII D2 protein</shortName>
        <ecNumber evidence="2">1.10.3.9</ecNumber>
    </recommendedName>
    <alternativeName>
        <fullName evidence="2">Photosystem Q(A) protein</fullName>
    </alternativeName>
</protein>
<organism>
    <name type="scientific">Pinus thunbergii</name>
    <name type="common">Japanese black pine</name>
    <name type="synonym">Pinus thunbergiana</name>
    <dbReference type="NCBI Taxonomy" id="3350"/>
    <lineage>
        <taxon>Eukaryota</taxon>
        <taxon>Viridiplantae</taxon>
        <taxon>Streptophyta</taxon>
        <taxon>Embryophyta</taxon>
        <taxon>Tracheophyta</taxon>
        <taxon>Spermatophyta</taxon>
        <taxon>Pinopsida</taxon>
        <taxon>Pinidae</taxon>
        <taxon>Conifers I</taxon>
        <taxon>Pinales</taxon>
        <taxon>Pinaceae</taxon>
        <taxon>Pinus</taxon>
        <taxon>Pinus subgen. Pinus</taxon>
    </lineage>
</organism>